<comment type="similarity">
    <text evidence="1">Belongs to the UPF0763 family.</text>
</comment>
<feature type="chain" id="PRO_0000394790" description="UPF0763 protein HPAG1_0649">
    <location>
        <begin position="1"/>
        <end position="171"/>
    </location>
</feature>
<gene>
    <name type="ordered locus">HPAG1_0649</name>
</gene>
<sequence length="171" mass="20110">MEKLPKKRVSKTKSQKLIHSLTTQKNRAFLKKISANEMLLELEKGAFKKNEAYFISDEEDKNYVLVPDNVISLLAENARKAFEARLRAELERDIITQAPIDFEDVREVSLQLLENLRQKDGNLPNINTLNFVKQIKKEHPNLFFNFDNMFKQPPFNENNFENFDNSDEENF</sequence>
<evidence type="ECO:0000255" key="1">
    <source>
        <dbReference type="HAMAP-Rule" id="MF_02110"/>
    </source>
</evidence>
<name>Y649_HELPH</name>
<proteinExistence type="inferred from homology"/>
<accession>Q1CTK6</accession>
<organism>
    <name type="scientific">Helicobacter pylori (strain HPAG1)</name>
    <dbReference type="NCBI Taxonomy" id="357544"/>
    <lineage>
        <taxon>Bacteria</taxon>
        <taxon>Pseudomonadati</taxon>
        <taxon>Campylobacterota</taxon>
        <taxon>Epsilonproteobacteria</taxon>
        <taxon>Campylobacterales</taxon>
        <taxon>Helicobacteraceae</taxon>
        <taxon>Helicobacter</taxon>
    </lineage>
</organism>
<reference key="1">
    <citation type="journal article" date="2006" name="Proc. Natl. Acad. Sci. U.S.A.">
        <title>The complete genome sequence of a chronic atrophic gastritis Helicobacter pylori strain: evolution during disease progression.</title>
        <authorList>
            <person name="Oh J.D."/>
            <person name="Kling-Baeckhed H."/>
            <person name="Giannakis M."/>
            <person name="Xu J."/>
            <person name="Fulton R.S."/>
            <person name="Fulton L.A."/>
            <person name="Cordum H.S."/>
            <person name="Wang C."/>
            <person name="Elliott G."/>
            <person name="Edwards J."/>
            <person name="Mardis E.R."/>
            <person name="Engstrand L.G."/>
            <person name="Gordon J.I."/>
        </authorList>
    </citation>
    <scope>NUCLEOTIDE SEQUENCE [LARGE SCALE GENOMIC DNA]</scope>
    <source>
        <strain>HPAG1</strain>
    </source>
</reference>
<dbReference type="EMBL" id="CP000241">
    <property type="protein sequence ID" value="ABF84716.1"/>
    <property type="molecule type" value="Genomic_DNA"/>
</dbReference>
<dbReference type="RefSeq" id="WP_000413462.1">
    <property type="nucleotide sequence ID" value="NC_008086.1"/>
</dbReference>
<dbReference type="KEGG" id="hpa:HPAG1_0649"/>
<dbReference type="HOGENOM" id="CLU_120359_0_0_7"/>
<dbReference type="HAMAP" id="MF_02110">
    <property type="entry name" value="UPF0763"/>
    <property type="match status" value="1"/>
</dbReference>
<dbReference type="InterPro" id="IPR019724">
    <property type="entry name" value="UPF0763"/>
</dbReference>
<dbReference type="Pfam" id="PF10788">
    <property type="entry name" value="DUF2603"/>
    <property type="match status" value="1"/>
</dbReference>
<protein>
    <recommendedName>
        <fullName evidence="1">UPF0763 protein HPAG1_0649</fullName>
    </recommendedName>
</protein>